<keyword id="KW-0012">Acyltransferase</keyword>
<keyword id="KW-0133">Cell shape</keyword>
<keyword id="KW-0961">Cell wall biogenesis/degradation</keyword>
<keyword id="KW-0963">Cytoplasm</keyword>
<keyword id="KW-0460">Magnesium</keyword>
<keyword id="KW-0479">Metal-binding</keyword>
<keyword id="KW-0511">Multifunctional enzyme</keyword>
<keyword id="KW-0548">Nucleotidyltransferase</keyword>
<keyword id="KW-0573">Peptidoglycan synthesis</keyword>
<keyword id="KW-1185">Reference proteome</keyword>
<keyword id="KW-0677">Repeat</keyword>
<keyword id="KW-0808">Transferase</keyword>
<comment type="function">
    <text evidence="1">Catalyzes the last two sequential reactions in the de novo biosynthetic pathway for UDP-N-acetylglucosamine (UDP-GlcNAc). The C-terminal domain catalyzes the transfer of acetyl group from acetyl coenzyme A to glucosamine-1-phosphate (GlcN-1-P) to produce N-acetylglucosamine-1-phosphate (GlcNAc-1-P), which is converted into UDP-GlcNAc by the transfer of uridine 5-monophosphate (from uridine 5-triphosphate), a reaction catalyzed by the N-terminal domain.</text>
</comment>
<comment type="catalytic activity">
    <reaction evidence="1">
        <text>alpha-D-glucosamine 1-phosphate + acetyl-CoA = N-acetyl-alpha-D-glucosamine 1-phosphate + CoA + H(+)</text>
        <dbReference type="Rhea" id="RHEA:13725"/>
        <dbReference type="ChEBI" id="CHEBI:15378"/>
        <dbReference type="ChEBI" id="CHEBI:57287"/>
        <dbReference type="ChEBI" id="CHEBI:57288"/>
        <dbReference type="ChEBI" id="CHEBI:57776"/>
        <dbReference type="ChEBI" id="CHEBI:58516"/>
        <dbReference type="EC" id="2.3.1.157"/>
    </reaction>
</comment>
<comment type="catalytic activity">
    <reaction evidence="1">
        <text>N-acetyl-alpha-D-glucosamine 1-phosphate + UTP + H(+) = UDP-N-acetyl-alpha-D-glucosamine + diphosphate</text>
        <dbReference type="Rhea" id="RHEA:13509"/>
        <dbReference type="ChEBI" id="CHEBI:15378"/>
        <dbReference type="ChEBI" id="CHEBI:33019"/>
        <dbReference type="ChEBI" id="CHEBI:46398"/>
        <dbReference type="ChEBI" id="CHEBI:57705"/>
        <dbReference type="ChEBI" id="CHEBI:57776"/>
        <dbReference type="EC" id="2.7.7.23"/>
    </reaction>
</comment>
<comment type="cofactor">
    <cofactor evidence="1">
        <name>Mg(2+)</name>
        <dbReference type="ChEBI" id="CHEBI:18420"/>
    </cofactor>
    <text evidence="1">Binds 1 Mg(2+) ion per subunit.</text>
</comment>
<comment type="pathway">
    <text evidence="1">Nucleotide-sugar biosynthesis; UDP-N-acetyl-alpha-D-glucosamine biosynthesis; N-acetyl-alpha-D-glucosamine 1-phosphate from alpha-D-glucosamine 6-phosphate (route II): step 2/2.</text>
</comment>
<comment type="pathway">
    <text evidence="1">Nucleotide-sugar biosynthesis; UDP-N-acetyl-alpha-D-glucosamine biosynthesis; UDP-N-acetyl-alpha-D-glucosamine from N-acetyl-alpha-D-glucosamine 1-phosphate: step 1/1.</text>
</comment>
<comment type="pathway">
    <text evidence="1">Bacterial outer membrane biogenesis; LPS lipid A biosynthesis.</text>
</comment>
<comment type="subunit">
    <text evidence="1">Homotrimer.</text>
</comment>
<comment type="subcellular location">
    <subcellularLocation>
        <location evidence="1">Cytoplasm</location>
    </subcellularLocation>
</comment>
<comment type="similarity">
    <text evidence="1">In the N-terminal section; belongs to the N-acetylglucosamine-1-phosphate uridyltransferase family.</text>
</comment>
<comment type="similarity">
    <text evidence="1">In the C-terminal section; belongs to the transferase hexapeptide repeat family.</text>
</comment>
<feature type="chain" id="PRO_0000233817" description="Bifunctional protein GlmU">
    <location>
        <begin position="1"/>
        <end position="446"/>
    </location>
</feature>
<feature type="region of interest" description="Pyrophosphorylase" evidence="1">
    <location>
        <begin position="1"/>
        <end position="226"/>
    </location>
</feature>
<feature type="region of interest" description="Linker" evidence="1">
    <location>
        <begin position="227"/>
        <end position="247"/>
    </location>
</feature>
<feature type="region of interest" description="N-acetyltransferase" evidence="1">
    <location>
        <begin position="248"/>
        <end position="446"/>
    </location>
</feature>
<feature type="active site" description="Proton acceptor" evidence="1">
    <location>
        <position position="359"/>
    </location>
</feature>
<feature type="binding site" evidence="1">
    <location>
        <begin position="7"/>
        <end position="10"/>
    </location>
    <ligand>
        <name>UDP-N-acetyl-alpha-D-glucosamine</name>
        <dbReference type="ChEBI" id="CHEBI:57705"/>
    </ligand>
</feature>
<feature type="binding site" evidence="1">
    <location>
        <position position="21"/>
    </location>
    <ligand>
        <name>UDP-N-acetyl-alpha-D-glucosamine</name>
        <dbReference type="ChEBI" id="CHEBI:57705"/>
    </ligand>
</feature>
<feature type="binding site" evidence="1">
    <location>
        <position position="73"/>
    </location>
    <ligand>
        <name>UDP-N-acetyl-alpha-D-glucosamine</name>
        <dbReference type="ChEBI" id="CHEBI:57705"/>
    </ligand>
</feature>
<feature type="binding site" evidence="1">
    <location>
        <begin position="78"/>
        <end position="79"/>
    </location>
    <ligand>
        <name>UDP-N-acetyl-alpha-D-glucosamine</name>
        <dbReference type="ChEBI" id="CHEBI:57705"/>
    </ligand>
</feature>
<feature type="binding site" evidence="1">
    <location>
        <position position="103"/>
    </location>
    <ligand>
        <name>Mg(2+)</name>
        <dbReference type="ChEBI" id="CHEBI:18420"/>
    </ligand>
</feature>
<feature type="binding site" evidence="1">
    <location>
        <position position="140"/>
    </location>
    <ligand>
        <name>UDP-N-acetyl-alpha-D-glucosamine</name>
        <dbReference type="ChEBI" id="CHEBI:57705"/>
    </ligand>
</feature>
<feature type="binding site" evidence="1">
    <location>
        <position position="155"/>
    </location>
    <ligand>
        <name>UDP-N-acetyl-alpha-D-glucosamine</name>
        <dbReference type="ChEBI" id="CHEBI:57705"/>
    </ligand>
</feature>
<feature type="binding site" evidence="1">
    <location>
        <position position="170"/>
    </location>
    <ligand>
        <name>UDP-N-acetyl-alpha-D-glucosamine</name>
        <dbReference type="ChEBI" id="CHEBI:57705"/>
    </ligand>
</feature>
<feature type="binding site" evidence="1">
    <location>
        <position position="224"/>
    </location>
    <ligand>
        <name>Mg(2+)</name>
        <dbReference type="ChEBI" id="CHEBI:18420"/>
    </ligand>
</feature>
<feature type="binding site" evidence="1">
    <location>
        <position position="224"/>
    </location>
    <ligand>
        <name>UDP-N-acetyl-alpha-D-glucosamine</name>
        <dbReference type="ChEBI" id="CHEBI:57705"/>
    </ligand>
</feature>
<feature type="binding site" evidence="1">
    <location>
        <position position="329"/>
    </location>
    <ligand>
        <name>UDP-N-acetyl-alpha-D-glucosamine</name>
        <dbReference type="ChEBI" id="CHEBI:57705"/>
    </ligand>
</feature>
<feature type="binding site" evidence="1">
    <location>
        <position position="347"/>
    </location>
    <ligand>
        <name>UDP-N-acetyl-alpha-D-glucosamine</name>
        <dbReference type="ChEBI" id="CHEBI:57705"/>
    </ligand>
</feature>
<feature type="binding site" evidence="1">
    <location>
        <position position="362"/>
    </location>
    <ligand>
        <name>UDP-N-acetyl-alpha-D-glucosamine</name>
        <dbReference type="ChEBI" id="CHEBI:57705"/>
    </ligand>
</feature>
<feature type="binding site" evidence="1">
    <location>
        <position position="373"/>
    </location>
    <ligand>
        <name>UDP-N-acetyl-alpha-D-glucosamine</name>
        <dbReference type="ChEBI" id="CHEBI:57705"/>
    </ligand>
</feature>
<feature type="binding site" evidence="1">
    <location>
        <position position="376"/>
    </location>
    <ligand>
        <name>acetyl-CoA</name>
        <dbReference type="ChEBI" id="CHEBI:57288"/>
    </ligand>
</feature>
<feature type="binding site" evidence="1">
    <location>
        <position position="419"/>
    </location>
    <ligand>
        <name>acetyl-CoA</name>
        <dbReference type="ChEBI" id="CHEBI:57288"/>
    </ligand>
</feature>
<feature type="binding site" evidence="1">
    <location>
        <position position="436"/>
    </location>
    <ligand>
        <name>acetyl-CoA</name>
        <dbReference type="ChEBI" id="CHEBI:57288"/>
    </ligand>
</feature>
<proteinExistence type="inferred from homology"/>
<organism>
    <name type="scientific">Prochlorococcus marinus (strain NATL2A)</name>
    <dbReference type="NCBI Taxonomy" id="59920"/>
    <lineage>
        <taxon>Bacteria</taxon>
        <taxon>Bacillati</taxon>
        <taxon>Cyanobacteriota</taxon>
        <taxon>Cyanophyceae</taxon>
        <taxon>Synechococcales</taxon>
        <taxon>Prochlorococcaceae</taxon>
        <taxon>Prochlorococcus</taxon>
    </lineage>
</organism>
<reference key="1">
    <citation type="journal article" date="2007" name="PLoS Genet.">
        <title>Patterns and implications of gene gain and loss in the evolution of Prochlorococcus.</title>
        <authorList>
            <person name="Kettler G.C."/>
            <person name="Martiny A.C."/>
            <person name="Huang K."/>
            <person name="Zucker J."/>
            <person name="Coleman M.L."/>
            <person name="Rodrigue S."/>
            <person name="Chen F."/>
            <person name="Lapidus A."/>
            <person name="Ferriera S."/>
            <person name="Johnson J."/>
            <person name="Steglich C."/>
            <person name="Church G.M."/>
            <person name="Richardson P."/>
            <person name="Chisholm S.W."/>
        </authorList>
    </citation>
    <scope>NUCLEOTIDE SEQUENCE [LARGE SCALE GENOMIC DNA]</scope>
    <source>
        <strain>NATL2A</strain>
    </source>
</reference>
<accession>Q46LT9</accession>
<protein>
    <recommendedName>
        <fullName evidence="1">Bifunctional protein GlmU</fullName>
    </recommendedName>
    <domain>
        <recommendedName>
            <fullName evidence="1">UDP-N-acetylglucosamine pyrophosphorylase</fullName>
            <ecNumber evidence="1">2.7.7.23</ecNumber>
        </recommendedName>
        <alternativeName>
            <fullName evidence="1">N-acetylglucosamine-1-phosphate uridyltransferase</fullName>
        </alternativeName>
    </domain>
    <domain>
        <recommendedName>
            <fullName evidence="1">Glucosamine-1-phosphate N-acetyltransferase</fullName>
            <ecNumber evidence="1">2.3.1.157</ecNumber>
        </recommendedName>
    </domain>
</protein>
<name>GLMU_PROMT</name>
<evidence type="ECO:0000255" key="1">
    <source>
        <dbReference type="HAMAP-Rule" id="MF_01631"/>
    </source>
</evidence>
<sequence length="446" mass="48685">MLAIAILAAGKGTRMKSKLPKVLHPLAGKSLIDRVLSCTHGLKPNRRLIVVGHQANLVEDSLRKHQDLDFVLQQPQNGTGHAIQQLKPRLKGFNGELLVLNGDVPLLKEETLSSLLKFHKESNASVTFLSASLDSPTGYGRVFTDESGLVKKIIEERDCTNEQRKNKLINAGIYCFNWQQLSDVLNLLSNQNSQNEIYLTDTISLLKKALHFEVDNPFEIKGINDRVQLSECEHYIQEELKSLWMSKGVSFVDPISCSLSEDSNFGTDVIIEPQTHLRGKCSIGNGCHLGPGSVITNSTLAENVLAIHSFINEATIGNNTSIGPFAHIRPESNIRQNSKIGNFVEIKKSCIGEGTKINHLSYVGDSALGKNINIGAGTITANFDGKNKHRTIIDDYSKTGANSVLVAPIKIGAHVTIGAGSTISKDIPDKSLVVERSKAIIRTKAD</sequence>
<gene>
    <name evidence="1" type="primary">glmU</name>
    <name type="ordered locus">PMN2A_0047</name>
</gene>
<dbReference type="EC" id="2.7.7.23" evidence="1"/>
<dbReference type="EC" id="2.3.1.157" evidence="1"/>
<dbReference type="EMBL" id="CP000095">
    <property type="protein sequence ID" value="AAZ57539.1"/>
    <property type="molecule type" value="Genomic_DNA"/>
</dbReference>
<dbReference type="RefSeq" id="WP_011293581.1">
    <property type="nucleotide sequence ID" value="NC_007335.2"/>
</dbReference>
<dbReference type="SMR" id="Q46LT9"/>
<dbReference type="STRING" id="59920.PMN2A_0047"/>
<dbReference type="KEGG" id="pmn:PMN2A_0047"/>
<dbReference type="HOGENOM" id="CLU_029499_15_2_3"/>
<dbReference type="OrthoDB" id="9775031at2"/>
<dbReference type="PhylomeDB" id="Q46LT9"/>
<dbReference type="UniPathway" id="UPA00113">
    <property type="reaction ID" value="UER00532"/>
</dbReference>
<dbReference type="UniPathway" id="UPA00113">
    <property type="reaction ID" value="UER00533"/>
</dbReference>
<dbReference type="UniPathway" id="UPA00973"/>
<dbReference type="Proteomes" id="UP000002535">
    <property type="component" value="Chromosome"/>
</dbReference>
<dbReference type="GO" id="GO:0031470">
    <property type="term" value="C:carboxysome"/>
    <property type="evidence" value="ECO:0007669"/>
    <property type="project" value="UniProtKB-ARBA"/>
</dbReference>
<dbReference type="GO" id="GO:0005737">
    <property type="term" value="C:cytoplasm"/>
    <property type="evidence" value="ECO:0007669"/>
    <property type="project" value="UniProtKB-SubCell"/>
</dbReference>
<dbReference type="GO" id="GO:0016020">
    <property type="term" value="C:membrane"/>
    <property type="evidence" value="ECO:0007669"/>
    <property type="project" value="GOC"/>
</dbReference>
<dbReference type="GO" id="GO:0019134">
    <property type="term" value="F:glucosamine-1-phosphate N-acetyltransferase activity"/>
    <property type="evidence" value="ECO:0007669"/>
    <property type="project" value="UniProtKB-UniRule"/>
</dbReference>
<dbReference type="GO" id="GO:0000287">
    <property type="term" value="F:magnesium ion binding"/>
    <property type="evidence" value="ECO:0007669"/>
    <property type="project" value="UniProtKB-UniRule"/>
</dbReference>
<dbReference type="GO" id="GO:0043886">
    <property type="term" value="F:structural constituent of carboxysome shell"/>
    <property type="evidence" value="ECO:0007669"/>
    <property type="project" value="UniProtKB-ARBA"/>
</dbReference>
<dbReference type="GO" id="GO:0003977">
    <property type="term" value="F:UDP-N-acetylglucosamine diphosphorylase activity"/>
    <property type="evidence" value="ECO:0007669"/>
    <property type="project" value="UniProtKB-UniRule"/>
</dbReference>
<dbReference type="GO" id="GO:0000902">
    <property type="term" value="P:cell morphogenesis"/>
    <property type="evidence" value="ECO:0007669"/>
    <property type="project" value="UniProtKB-UniRule"/>
</dbReference>
<dbReference type="GO" id="GO:0071555">
    <property type="term" value="P:cell wall organization"/>
    <property type="evidence" value="ECO:0007669"/>
    <property type="project" value="UniProtKB-KW"/>
</dbReference>
<dbReference type="GO" id="GO:0009245">
    <property type="term" value="P:lipid A biosynthetic process"/>
    <property type="evidence" value="ECO:0007669"/>
    <property type="project" value="UniProtKB-UniRule"/>
</dbReference>
<dbReference type="GO" id="GO:0009252">
    <property type="term" value="P:peptidoglycan biosynthetic process"/>
    <property type="evidence" value="ECO:0007669"/>
    <property type="project" value="UniProtKB-UniRule"/>
</dbReference>
<dbReference type="GO" id="GO:0008360">
    <property type="term" value="P:regulation of cell shape"/>
    <property type="evidence" value="ECO:0007669"/>
    <property type="project" value="UniProtKB-KW"/>
</dbReference>
<dbReference type="GO" id="GO:0006048">
    <property type="term" value="P:UDP-N-acetylglucosamine biosynthetic process"/>
    <property type="evidence" value="ECO:0007669"/>
    <property type="project" value="UniProtKB-UniPathway"/>
</dbReference>
<dbReference type="CDD" id="cd02540">
    <property type="entry name" value="GT2_GlmU_N_bac"/>
    <property type="match status" value="1"/>
</dbReference>
<dbReference type="CDD" id="cd03353">
    <property type="entry name" value="LbH_GlmU_C"/>
    <property type="match status" value="1"/>
</dbReference>
<dbReference type="Gene3D" id="2.160.10.10">
    <property type="entry name" value="Hexapeptide repeat proteins"/>
    <property type="match status" value="1"/>
</dbReference>
<dbReference type="Gene3D" id="3.90.550.10">
    <property type="entry name" value="Spore Coat Polysaccharide Biosynthesis Protein SpsA, Chain A"/>
    <property type="match status" value="1"/>
</dbReference>
<dbReference type="HAMAP" id="MF_01631">
    <property type="entry name" value="GlmU"/>
    <property type="match status" value="1"/>
</dbReference>
<dbReference type="InterPro" id="IPR005882">
    <property type="entry name" value="Bifunctional_GlmU"/>
</dbReference>
<dbReference type="InterPro" id="IPR050065">
    <property type="entry name" value="GlmU-like"/>
</dbReference>
<dbReference type="InterPro" id="IPR038009">
    <property type="entry name" value="GlmU_C_LbH"/>
</dbReference>
<dbReference type="InterPro" id="IPR001451">
    <property type="entry name" value="Hexapep"/>
</dbReference>
<dbReference type="InterPro" id="IPR005835">
    <property type="entry name" value="NTP_transferase_dom"/>
</dbReference>
<dbReference type="InterPro" id="IPR029044">
    <property type="entry name" value="Nucleotide-diphossugar_trans"/>
</dbReference>
<dbReference type="InterPro" id="IPR011004">
    <property type="entry name" value="Trimer_LpxA-like_sf"/>
</dbReference>
<dbReference type="NCBIfam" id="TIGR01173">
    <property type="entry name" value="glmU"/>
    <property type="match status" value="1"/>
</dbReference>
<dbReference type="NCBIfam" id="NF010940">
    <property type="entry name" value="PRK14360.1"/>
    <property type="match status" value="1"/>
</dbReference>
<dbReference type="PANTHER" id="PTHR43584:SF3">
    <property type="entry name" value="BIFUNCTIONAL PROTEIN GLMU"/>
    <property type="match status" value="1"/>
</dbReference>
<dbReference type="PANTHER" id="PTHR43584">
    <property type="entry name" value="NUCLEOTIDYL TRANSFERASE"/>
    <property type="match status" value="1"/>
</dbReference>
<dbReference type="Pfam" id="PF00132">
    <property type="entry name" value="Hexapep"/>
    <property type="match status" value="3"/>
</dbReference>
<dbReference type="Pfam" id="PF00483">
    <property type="entry name" value="NTP_transferase"/>
    <property type="match status" value="1"/>
</dbReference>
<dbReference type="SUPFAM" id="SSF53448">
    <property type="entry name" value="Nucleotide-diphospho-sugar transferases"/>
    <property type="match status" value="1"/>
</dbReference>
<dbReference type="SUPFAM" id="SSF51161">
    <property type="entry name" value="Trimeric LpxA-like enzymes"/>
    <property type="match status" value="1"/>
</dbReference>